<protein>
    <recommendedName>
        <fullName>Aminopeptidase Q</fullName>
        <ecNumber evidence="5">3.4.11.-</ecNumber>
    </recommendedName>
    <alternativeName>
        <fullName>Laeverin</fullName>
    </alternativeName>
    <alternativeName>
        <fullName evidence="9">Tabulin</fullName>
    </alternativeName>
    <alternativeName>
        <fullName evidence="9">Transmembrane Aminopeptidase Q</fullName>
    </alternativeName>
</protein>
<comment type="function">
    <text evidence="2 8">Metalloprotease which may be important for placentation by regulating biological activity of key peptides at the embryo-maternal interface (By similarity). Involved in coat pigmentation patterns. During skin development, may be required to establish the periodicity of tabby markings, initiating a pre-pattern at or before hair follicle development (PubMed:22997338).</text>
</comment>
<comment type="cofactor">
    <cofactor evidence="5">
        <name>Zn(2+)</name>
        <dbReference type="ChEBI" id="CHEBI:29105"/>
    </cofactor>
    <text evidence="5">Binds 1 zinc ion per subunit.</text>
</comment>
<comment type="subcellular location">
    <subcellularLocation>
        <location evidence="2">Membrane</location>
        <topology evidence="2">Single-pass type II membrane protein</topology>
    </subcellularLocation>
</comment>
<comment type="tissue specificity">
    <text evidence="8">Expressed in skin (PubMed:22997338). Expression levels do not differ between dark and light skin areas (PubMed:22997338).</text>
</comment>
<comment type="polymorphism">
    <text evidence="8">Allelic variations in LVRN are associated with tabby pattern variation in domestic cats.</text>
</comment>
<comment type="similarity">
    <text evidence="5">Belongs to the peptidase M1 family.</text>
</comment>
<proteinExistence type="evidence at protein level"/>
<name>AMPQ_FELCA</name>
<dbReference type="EC" id="3.4.11.-" evidence="5"/>
<dbReference type="EMBL" id="AANG04002524">
    <property type="status" value="NOT_ANNOTATED_CDS"/>
    <property type="molecule type" value="Genomic_DNA"/>
</dbReference>
<dbReference type="SMR" id="M3XFH7"/>
<dbReference type="STRING" id="9685.ENSFCAP00000025388"/>
<dbReference type="MEROPS" id="M01.026"/>
<dbReference type="GlyCosmos" id="M3XFH7">
    <property type="glycosylation" value="13 sites, No reported glycans"/>
</dbReference>
<dbReference type="PaxDb" id="9685-ENSFCAP00000025388"/>
<dbReference type="eggNOG" id="KOG1046">
    <property type="taxonomic scope" value="Eukaryota"/>
</dbReference>
<dbReference type="HOGENOM" id="CLU_003705_4_5_1"/>
<dbReference type="InParanoid" id="M3XFH7"/>
<dbReference type="Proteomes" id="UP000011712">
    <property type="component" value="Unplaced"/>
</dbReference>
<dbReference type="GO" id="GO:0005737">
    <property type="term" value="C:cytoplasm"/>
    <property type="evidence" value="ECO:0000318"/>
    <property type="project" value="GO_Central"/>
</dbReference>
<dbReference type="GO" id="GO:0005615">
    <property type="term" value="C:extracellular space"/>
    <property type="evidence" value="ECO:0000318"/>
    <property type="project" value="GO_Central"/>
</dbReference>
<dbReference type="GO" id="GO:0016020">
    <property type="term" value="C:membrane"/>
    <property type="evidence" value="ECO:0000318"/>
    <property type="project" value="GO_Central"/>
</dbReference>
<dbReference type="GO" id="GO:0070006">
    <property type="term" value="F:metalloaminopeptidase activity"/>
    <property type="evidence" value="ECO:0000318"/>
    <property type="project" value="GO_Central"/>
</dbReference>
<dbReference type="GO" id="GO:0042277">
    <property type="term" value="F:peptide binding"/>
    <property type="evidence" value="ECO:0000318"/>
    <property type="project" value="GO_Central"/>
</dbReference>
<dbReference type="GO" id="GO:0008270">
    <property type="term" value="F:zinc ion binding"/>
    <property type="evidence" value="ECO:0000318"/>
    <property type="project" value="GO_Central"/>
</dbReference>
<dbReference type="GO" id="GO:0043171">
    <property type="term" value="P:peptide catabolic process"/>
    <property type="evidence" value="ECO:0000318"/>
    <property type="project" value="GO_Central"/>
</dbReference>
<dbReference type="GO" id="GO:0006508">
    <property type="term" value="P:proteolysis"/>
    <property type="evidence" value="ECO:0000318"/>
    <property type="project" value="GO_Central"/>
</dbReference>
<dbReference type="CDD" id="cd09601">
    <property type="entry name" value="M1_APN-Q_like"/>
    <property type="match status" value="1"/>
</dbReference>
<dbReference type="FunFam" id="1.10.390.10:FF:000015">
    <property type="entry name" value="Aminopeptidase"/>
    <property type="match status" value="1"/>
</dbReference>
<dbReference type="FunFam" id="1.25.50.20:FF:000006">
    <property type="entry name" value="Aminopeptidase"/>
    <property type="match status" value="1"/>
</dbReference>
<dbReference type="FunFam" id="2.60.40.1910:FF:000005">
    <property type="entry name" value="Aminopeptidase"/>
    <property type="match status" value="1"/>
</dbReference>
<dbReference type="FunFam" id="2.60.40.1730:FF:000012">
    <property type="entry name" value="Aminopeptidase N"/>
    <property type="match status" value="1"/>
</dbReference>
<dbReference type="Gene3D" id="1.25.50.20">
    <property type="match status" value="1"/>
</dbReference>
<dbReference type="Gene3D" id="2.60.40.1910">
    <property type="match status" value="1"/>
</dbReference>
<dbReference type="Gene3D" id="1.10.390.10">
    <property type="entry name" value="Neutral Protease Domain 2"/>
    <property type="match status" value="1"/>
</dbReference>
<dbReference type="Gene3D" id="2.60.40.1730">
    <property type="entry name" value="tricorn interacting facor f3 domain"/>
    <property type="match status" value="1"/>
</dbReference>
<dbReference type="InterPro" id="IPR045357">
    <property type="entry name" value="Aminopeptidase_N-like_N"/>
</dbReference>
<dbReference type="InterPro" id="IPR042097">
    <property type="entry name" value="Aminopeptidase_N-like_N_sf"/>
</dbReference>
<dbReference type="InterPro" id="IPR024571">
    <property type="entry name" value="ERAP1-like_C_dom"/>
</dbReference>
<dbReference type="InterPro" id="IPR034016">
    <property type="entry name" value="M1_APN-typ"/>
</dbReference>
<dbReference type="InterPro" id="IPR001930">
    <property type="entry name" value="Peptidase_M1"/>
</dbReference>
<dbReference type="InterPro" id="IPR050344">
    <property type="entry name" value="Peptidase_M1_aminopeptidases"/>
</dbReference>
<dbReference type="InterPro" id="IPR014782">
    <property type="entry name" value="Peptidase_M1_dom"/>
</dbReference>
<dbReference type="InterPro" id="IPR027268">
    <property type="entry name" value="Peptidase_M4/M1_CTD_sf"/>
</dbReference>
<dbReference type="PANTHER" id="PTHR11533:SF31">
    <property type="entry name" value="AMINOPEPTIDASE Q"/>
    <property type="match status" value="1"/>
</dbReference>
<dbReference type="PANTHER" id="PTHR11533">
    <property type="entry name" value="PROTEASE M1 ZINC METALLOPROTEASE"/>
    <property type="match status" value="1"/>
</dbReference>
<dbReference type="Pfam" id="PF11838">
    <property type="entry name" value="ERAP1_C"/>
    <property type="match status" value="1"/>
</dbReference>
<dbReference type="Pfam" id="PF01433">
    <property type="entry name" value="Peptidase_M1"/>
    <property type="match status" value="1"/>
</dbReference>
<dbReference type="Pfam" id="PF17900">
    <property type="entry name" value="Peptidase_M1_N"/>
    <property type="match status" value="1"/>
</dbReference>
<dbReference type="PRINTS" id="PR00756">
    <property type="entry name" value="ALADIPTASE"/>
</dbReference>
<dbReference type="SUPFAM" id="SSF63737">
    <property type="entry name" value="Leukotriene A4 hydrolase N-terminal domain"/>
    <property type="match status" value="1"/>
</dbReference>
<dbReference type="SUPFAM" id="SSF55486">
    <property type="entry name" value="Metalloproteases ('zincins'), catalytic domain"/>
    <property type="match status" value="1"/>
</dbReference>
<dbReference type="PROSITE" id="PS00142">
    <property type="entry name" value="ZINC_PROTEASE"/>
    <property type="match status" value="1"/>
</dbReference>
<evidence type="ECO:0000250" key="1"/>
<evidence type="ECO:0000250" key="2">
    <source>
        <dbReference type="UniProtKB" id="Q6Q4G3"/>
    </source>
</evidence>
<evidence type="ECO:0000255" key="3"/>
<evidence type="ECO:0000255" key="4">
    <source>
        <dbReference type="PROSITE-ProRule" id="PRU10095"/>
    </source>
</evidence>
<evidence type="ECO:0000255" key="5">
    <source>
        <dbReference type="RuleBase" id="RU364040"/>
    </source>
</evidence>
<evidence type="ECO:0000256" key="6">
    <source>
        <dbReference type="SAM" id="MobiDB-lite"/>
    </source>
</evidence>
<evidence type="ECO:0000269" key="7">
    <source>
    </source>
</evidence>
<evidence type="ECO:0000269" key="8">
    <source>
    </source>
</evidence>
<evidence type="ECO:0000303" key="9">
    <source>
    </source>
</evidence>
<evidence type="ECO:0000305" key="10"/>
<organism>
    <name type="scientific">Felis catus</name>
    <name type="common">Cat</name>
    <name type="synonym">Felis silvestris catus</name>
    <dbReference type="NCBI Taxonomy" id="9685"/>
    <lineage>
        <taxon>Eukaryota</taxon>
        <taxon>Metazoa</taxon>
        <taxon>Chordata</taxon>
        <taxon>Craniata</taxon>
        <taxon>Vertebrata</taxon>
        <taxon>Euteleostomi</taxon>
        <taxon>Mammalia</taxon>
        <taxon>Eutheria</taxon>
        <taxon>Laurasiatheria</taxon>
        <taxon>Carnivora</taxon>
        <taxon>Feliformia</taxon>
        <taxon>Felidae</taxon>
        <taxon>Felinae</taxon>
        <taxon>Felis</taxon>
    </lineage>
</organism>
<accession>M3XFH7</accession>
<sequence>MGPPSSSGFYVSRAVALLLAALAAALLLALAVLAALYGRCARVQPSDLHHSGVPDAASSPRGTQEEPLPTWPPRPTREPAGTATPGHWRPPGPWDQLRLPPWLVPLHYELELWPRLRPNEFQSPTLSFTGRVNITVRCAAATARLLLHSLFLDCESAEVRGPLSSGPRDGALGRVPVDDVWFAFDMQYMVLELGATLQPGSRYELQLSFSGLVYRDLREGLFFSIYTDQGERRALLASQMEPTFARSVFPCFDEPALKATFNITIIHHPSYGALSNMPKLGQSEKRDVNGSVWTVTTFSTTPHMPTYLVALAICDYDHVSRTERGQEIRIWARKDAIANGNAAFALNITGPIFSFLEDLFNISYPLPKTDIIALPTFDNSAMENWGLLIFDESLLLMQPNDQVTDKKAVISFILSHEIGHQWFGNLVTMNWWNDIWLKEGFASYFEFGVINYFNPKFRRNEVFFSNILHHVLSEDHALVSRAVSLKVENFTETSEINELFDLFTYNKGASLARMLSSFLNENVFISALKSYLKTFSYSNAEQDDLWRHFQMVVDNQSKILLPAPVKSIMDRWTHQSGFPVITLNVSTGAMKQEPFYLGKVQNQTLLTHNDTWIVPILWIKNGITQSLVWLDKSSEIFPEMQVSDSDHDWVILNLNMTGYYRVNYDKVGWKKLKQQLEKDPKAIPVIHRLQMIDDAFSLSKNNYVEIETALDLTKYLAEEDEIIVWYAVLVNLVTKDLVFDVNNYDMYPLLKKYLLKRLISIWNMYSTVIRENVAALQDDYLALVALEKLFETACWLGLEDCLQLSRELFKNWTNHPENEIPYPIKSVVLCYGVAFGSDEEWDFLLNMYSNKTKEEERIQLTYAMSCSKDPWILHRYLEYAVTAAPFTFNETNIMEVVAESEVGRYIVKDFLINNWQAVSERYGTQSLVNLMYIIGRTISTDLQITELQQFFGNMLEEHQKLTVRAKLQTIKNKNLENKKRNARMTAWLRKNT</sequence>
<feature type="initiator methionine" description="Removed" evidence="2">
    <location>
        <position position="1"/>
    </location>
</feature>
<feature type="chain" id="PRO_0000449894" description="Aminopeptidase Q">
    <location>
        <begin position="2"/>
        <end position="992"/>
    </location>
</feature>
<feature type="topological domain" description="Cytoplasmic" evidence="10">
    <location>
        <begin position="2"/>
        <end position="13"/>
    </location>
</feature>
<feature type="transmembrane region" description="Helical; Signal-anchor for type II membrane protein" evidence="3">
    <location>
        <begin position="14"/>
        <end position="34"/>
    </location>
</feature>
<feature type="topological domain" description="Extracellular" evidence="10">
    <location>
        <begin position="35"/>
        <end position="992"/>
    </location>
</feature>
<feature type="region of interest" description="Disordered" evidence="6">
    <location>
        <begin position="47"/>
        <end position="92"/>
    </location>
</feature>
<feature type="active site" description="Proton acceptor" evidence="4">
    <location>
        <position position="417"/>
    </location>
</feature>
<feature type="active site" description="Proton donor" evidence="4">
    <location>
        <position position="505"/>
    </location>
</feature>
<feature type="binding site" evidence="1">
    <location>
        <position position="241"/>
    </location>
    <ligand>
        <name>substrate</name>
    </ligand>
</feature>
<feature type="binding site" evidence="1">
    <location>
        <begin position="380"/>
        <end position="384"/>
    </location>
    <ligand>
        <name>substrate</name>
    </ligand>
</feature>
<feature type="binding site" evidence="4">
    <location>
        <position position="416"/>
    </location>
    <ligand>
        <name>Zn(2+)</name>
        <dbReference type="ChEBI" id="CHEBI:29105"/>
        <note>catalytic</note>
    </ligand>
</feature>
<feature type="binding site" evidence="4">
    <location>
        <position position="420"/>
    </location>
    <ligand>
        <name>Zn(2+)</name>
        <dbReference type="ChEBI" id="CHEBI:29105"/>
        <note>catalytic</note>
    </ligand>
</feature>
<feature type="binding site" evidence="4">
    <location>
        <position position="439"/>
    </location>
    <ligand>
        <name>Zn(2+)</name>
        <dbReference type="ChEBI" id="CHEBI:29105"/>
        <note>catalytic</note>
    </ligand>
</feature>
<feature type="site" description="Transition state stabilizer" evidence="1">
    <location>
        <position position="505"/>
    </location>
</feature>
<feature type="glycosylation site" description="N-linked (GlcNAc...) asparagine" evidence="3">
    <location>
        <position position="133"/>
    </location>
</feature>
<feature type="glycosylation site" description="N-linked (GlcNAc...) asparagine" evidence="3">
    <location>
        <position position="262"/>
    </location>
</feature>
<feature type="glycosylation site" description="N-linked (GlcNAc...) asparagine" evidence="3">
    <location>
        <position position="289"/>
    </location>
</feature>
<feature type="glycosylation site" description="N-linked (GlcNAc...) asparagine" evidence="3">
    <location>
        <position position="347"/>
    </location>
</feature>
<feature type="glycosylation site" description="N-linked (GlcNAc...) asparagine" evidence="3">
    <location>
        <position position="361"/>
    </location>
</feature>
<feature type="glycosylation site" description="N-linked (GlcNAc...) asparagine" evidence="3">
    <location>
        <position position="555"/>
    </location>
</feature>
<feature type="glycosylation site" description="N-linked (GlcNAc...) asparagine" evidence="3">
    <location>
        <position position="584"/>
    </location>
</feature>
<feature type="glycosylation site" description="N-linked (GlcNAc...) asparagine" evidence="3">
    <location>
        <position position="602"/>
    </location>
</feature>
<feature type="glycosylation site" description="N-linked (GlcNAc...) asparagine" evidence="3">
    <location>
        <position position="609"/>
    </location>
</feature>
<feature type="glycosylation site" description="N-linked (GlcNAc...) asparagine" evidence="3">
    <location>
        <position position="655"/>
    </location>
</feature>
<feature type="glycosylation site" description="N-linked (GlcNAc...) asparagine" evidence="3">
    <location>
        <position position="811"/>
    </location>
</feature>
<feature type="glycosylation site" description="N-linked (GlcNAc...) asparagine" evidence="3">
    <location>
        <position position="850"/>
    </location>
</feature>
<feature type="glycosylation site" description="N-linked (GlcNAc...) asparagine" evidence="3">
    <location>
        <position position="889"/>
    </location>
</feature>
<feature type="sequence variant" description="Associated with blotched coat pattern." evidence="8">
    <location>
        <begin position="59"/>
        <end position="992"/>
    </location>
</feature>
<feature type="sequence variant" description="Associated with atypical swirled coat pattern." evidence="8">
    <original>A</original>
    <variation>N</variation>
    <location>
        <position position="139"/>
    </location>
</feature>
<feature type="sequence variant" description="No effect on coat pattern." evidence="8">
    <original>A</original>
    <variation>T</variation>
    <location>
        <position position="139"/>
    </location>
</feature>
<feature type="sequence variant" description="Associated with blotched coat pattern." evidence="8">
    <original>D</original>
    <variation>N</variation>
    <location>
        <position position="228"/>
    </location>
</feature>
<feature type="sequence variant" description="Associated with blotched coat pattern." evidence="7 8">
    <location>
        <begin position="841"/>
        <end position="992"/>
    </location>
</feature>
<keyword id="KW-0031">Aminopeptidase</keyword>
<keyword id="KW-0217">Developmental protein</keyword>
<keyword id="KW-0325">Glycoprotein</keyword>
<keyword id="KW-0378">Hydrolase</keyword>
<keyword id="KW-0472">Membrane</keyword>
<keyword id="KW-0479">Metal-binding</keyword>
<keyword id="KW-0482">Metalloprotease</keyword>
<keyword id="KW-0645">Protease</keyword>
<keyword id="KW-1185">Reference proteome</keyword>
<keyword id="KW-0735">Signal-anchor</keyword>
<keyword id="KW-0812">Transmembrane</keyword>
<keyword id="KW-1133">Transmembrane helix</keyword>
<keyword id="KW-0862">Zinc</keyword>
<gene>
    <name type="primary">LVRN</name>
    <name evidence="9" type="synonym">TAQPEP</name>
</gene>
<reference key="1">
    <citation type="journal article" date="2007" name="Genome Res.">
        <title>Initial sequence and comparative analysis of the cat genome.</title>
        <authorList>
            <person name="Pontius J.U."/>
            <person name="Mullikin J.C."/>
            <person name="Smith D.R."/>
            <person name="Lindblad-Toh K."/>
            <person name="Gnerre S."/>
            <person name="Clamp M."/>
            <person name="Chang J."/>
            <person name="Stephens R."/>
            <person name="Neelam B."/>
            <person name="Volfovsky N."/>
            <person name="Schaffer A.A."/>
            <person name="Agarwala R."/>
            <person name="Narfstrom K."/>
            <person name="Murphy W.J."/>
            <person name="Giger U."/>
            <person name="Roca A.L."/>
            <person name="Antunes A."/>
            <person name="Menotti-Raymond M."/>
            <person name="Yuhki N."/>
            <person name="Pecon-Slattery J."/>
            <person name="Johnson W.E."/>
            <person name="Bourque G."/>
            <person name="Tesler G."/>
            <person name="O'Brien S.J."/>
        </authorList>
    </citation>
    <scope>NUCLEOTIDE SEQUENCE [LARGE SCALE GENOMIC DNA]</scope>
    <scope>VARIANT 841-TRP--THR-992 DEL</scope>
    <source>
        <strain>Abyssinian</strain>
    </source>
</reference>
<reference key="2">
    <citation type="journal article" date="2012" name="Science">
        <title>Specifying and sustaining pigmentation patterns in domestic and wild cats.</title>
        <authorList>
            <person name="Kaelin C.B."/>
            <person name="Xu X."/>
            <person name="Hong L.Z."/>
            <person name="David V.A."/>
            <person name="McGowan K.A."/>
            <person name="Schmidt-Kuentzel A."/>
            <person name="Roelke M.E."/>
            <person name="Pino J."/>
            <person name="Pontius J."/>
            <person name="Cooper G.M."/>
            <person name="Manuel H."/>
            <person name="Swanson W.F."/>
            <person name="Marker L."/>
            <person name="Harper C.K."/>
            <person name="van Dyk A."/>
            <person name="Yue B."/>
            <person name="Mullikin J.C."/>
            <person name="Warren W.C."/>
            <person name="Eizirik E."/>
            <person name="Kos L."/>
            <person name="O'Brien S.J."/>
            <person name="Barsh G.S."/>
            <person name="Menotti-Raymond M."/>
        </authorList>
    </citation>
    <scope>FUNCTION</scope>
    <scope>TISSUE SPECIFICITY</scope>
    <scope>CHARACTERIZATION OF VARIANTS 59-SER--THR-991 DEL; ASN-139; ASN-228 AND 841-TRP--THR-992 DEL</scope>
</reference>